<protein>
    <recommendedName>
        <fullName evidence="1">Probable transcriptional regulatory protein Erum3660/ERWE_CDS_03770</fullName>
    </recommendedName>
</protein>
<proteinExistence type="inferred from homology"/>
<name>Y377_EHRRW</name>
<gene>
    <name type="ordered locus">Erum3660</name>
    <name type="ordered locus">ERWE_CDS_03770</name>
</gene>
<comment type="subcellular location">
    <subcellularLocation>
        <location evidence="1">Cytoplasm</location>
    </subcellularLocation>
</comment>
<comment type="similarity">
    <text evidence="1">Belongs to the TACO1 family.</text>
</comment>
<sequence length="249" mass="28339">MAGHSQFANIKHRKGAQDAKRAQKFTKLIREIIVATKQGLPDPEFNSRLRSAIITAKKENLPKDRIDAAIKTASGNNQHDNFEEVVYEGYGPGNIALIIQTLTNNRNRTAAELRHALSKYNGKLGESGSVSFLFNHVGLIAYKASSINSFDTLFNTAIELQALDVEENDYDEEKMYYVTCNIQDFGNVRDQLFKKFSDAEFSRLFWKPINITTIDDEELQKRILNLMDVLENNDDVQHVDSNFIFNTKI</sequence>
<reference key="1">
    <citation type="journal article" date="2005" name="Proc. Natl. Acad. Sci. U.S.A.">
        <title>The genome of the heartwater agent Ehrlichia ruminantium contains multiple tandem repeats of actively variable copy number.</title>
        <authorList>
            <person name="Collins N.E."/>
            <person name="Liebenberg J."/>
            <person name="de Villiers E.P."/>
            <person name="Brayton K.A."/>
            <person name="Louw E."/>
            <person name="Pretorius A."/>
            <person name="Faber F.E."/>
            <person name="van Heerden H."/>
            <person name="Josemans A."/>
            <person name="van Kleef M."/>
            <person name="Steyn H.C."/>
            <person name="van Strijp M.F."/>
            <person name="Zweygarth E."/>
            <person name="Jongejan F."/>
            <person name="Maillard J.C."/>
            <person name="Berthier D."/>
            <person name="Botha M."/>
            <person name="Joubert F."/>
            <person name="Corton C.H."/>
            <person name="Thomson N.R."/>
            <person name="Allsopp M.T."/>
            <person name="Allsopp B.A."/>
        </authorList>
    </citation>
    <scope>NUCLEOTIDE SEQUENCE [LARGE SCALE GENOMIC DNA]</scope>
    <source>
        <strain>Welgevonden</strain>
    </source>
</reference>
<reference key="2">
    <citation type="journal article" date="2006" name="J. Bacteriol.">
        <title>Comparative genomic analysis of three strains of Ehrlichia ruminantium reveals an active process of genome size plasticity.</title>
        <authorList>
            <person name="Frutos R."/>
            <person name="Viari A."/>
            <person name="Ferraz C."/>
            <person name="Morgat A."/>
            <person name="Eychenie S."/>
            <person name="Kandassamy Y."/>
            <person name="Chantal I."/>
            <person name="Bensaid A."/>
            <person name="Coissac E."/>
            <person name="Vachiery N."/>
            <person name="Demaille J."/>
            <person name="Martinez D."/>
        </authorList>
    </citation>
    <scope>NUCLEOTIDE SEQUENCE [LARGE SCALE GENOMIC DNA]</scope>
    <source>
        <strain>Welgevonden</strain>
    </source>
</reference>
<accession>Q5HBG4</accession>
<accession>Q5FEE6</accession>
<evidence type="ECO:0000255" key="1">
    <source>
        <dbReference type="HAMAP-Rule" id="MF_00693"/>
    </source>
</evidence>
<evidence type="ECO:0000256" key="2">
    <source>
        <dbReference type="SAM" id="MobiDB-lite"/>
    </source>
</evidence>
<organism>
    <name type="scientific">Ehrlichia ruminantium (strain Welgevonden)</name>
    <dbReference type="NCBI Taxonomy" id="254945"/>
    <lineage>
        <taxon>Bacteria</taxon>
        <taxon>Pseudomonadati</taxon>
        <taxon>Pseudomonadota</taxon>
        <taxon>Alphaproteobacteria</taxon>
        <taxon>Rickettsiales</taxon>
        <taxon>Anaplasmataceae</taxon>
        <taxon>Ehrlichia</taxon>
    </lineage>
</organism>
<dbReference type="EMBL" id="CR767821">
    <property type="protein sequence ID" value="CAH58087.1"/>
    <property type="molecule type" value="Genomic_DNA"/>
</dbReference>
<dbReference type="EMBL" id="CR925678">
    <property type="protein sequence ID" value="CAI26871.1"/>
    <property type="molecule type" value="Genomic_DNA"/>
</dbReference>
<dbReference type="RefSeq" id="WP_011155047.1">
    <property type="nucleotide sequence ID" value="NC_005295.2"/>
</dbReference>
<dbReference type="SMR" id="Q5HBG4"/>
<dbReference type="GeneID" id="33057479"/>
<dbReference type="KEGG" id="eru:Erum3660"/>
<dbReference type="KEGG" id="erw:ERWE_CDS_03770"/>
<dbReference type="eggNOG" id="COG0217">
    <property type="taxonomic scope" value="Bacteria"/>
</dbReference>
<dbReference type="HOGENOM" id="CLU_062974_2_2_5"/>
<dbReference type="Proteomes" id="UP000001021">
    <property type="component" value="Chromosome"/>
</dbReference>
<dbReference type="GO" id="GO:0005737">
    <property type="term" value="C:cytoplasm"/>
    <property type="evidence" value="ECO:0007669"/>
    <property type="project" value="UniProtKB-SubCell"/>
</dbReference>
<dbReference type="GO" id="GO:0003677">
    <property type="term" value="F:DNA binding"/>
    <property type="evidence" value="ECO:0007669"/>
    <property type="project" value="UniProtKB-UniRule"/>
</dbReference>
<dbReference type="GO" id="GO:0006355">
    <property type="term" value="P:regulation of DNA-templated transcription"/>
    <property type="evidence" value="ECO:0007669"/>
    <property type="project" value="UniProtKB-UniRule"/>
</dbReference>
<dbReference type="FunFam" id="1.10.10.200:FF:000002">
    <property type="entry name" value="Probable transcriptional regulatory protein CLM62_37755"/>
    <property type="match status" value="1"/>
</dbReference>
<dbReference type="Gene3D" id="1.10.10.200">
    <property type="match status" value="1"/>
</dbReference>
<dbReference type="Gene3D" id="3.30.70.980">
    <property type="match status" value="2"/>
</dbReference>
<dbReference type="HAMAP" id="MF_00693">
    <property type="entry name" value="Transcrip_reg_TACO1"/>
    <property type="match status" value="1"/>
</dbReference>
<dbReference type="InterPro" id="IPR017856">
    <property type="entry name" value="Integrase-like_N"/>
</dbReference>
<dbReference type="InterPro" id="IPR048300">
    <property type="entry name" value="TACO1_YebC-like_2nd/3rd_dom"/>
</dbReference>
<dbReference type="InterPro" id="IPR049083">
    <property type="entry name" value="TACO1_YebC_N"/>
</dbReference>
<dbReference type="InterPro" id="IPR002876">
    <property type="entry name" value="Transcrip_reg_TACO1-like"/>
</dbReference>
<dbReference type="InterPro" id="IPR026564">
    <property type="entry name" value="Transcrip_reg_TACO1-like_dom3"/>
</dbReference>
<dbReference type="InterPro" id="IPR029072">
    <property type="entry name" value="YebC-like"/>
</dbReference>
<dbReference type="NCBIfam" id="NF001030">
    <property type="entry name" value="PRK00110.1"/>
    <property type="match status" value="1"/>
</dbReference>
<dbReference type="NCBIfam" id="NF009044">
    <property type="entry name" value="PRK12378.1"/>
    <property type="match status" value="1"/>
</dbReference>
<dbReference type="NCBIfam" id="TIGR01033">
    <property type="entry name" value="YebC/PmpR family DNA-binding transcriptional regulator"/>
    <property type="match status" value="1"/>
</dbReference>
<dbReference type="PANTHER" id="PTHR12532:SF11">
    <property type="match status" value="1"/>
</dbReference>
<dbReference type="PANTHER" id="PTHR12532">
    <property type="entry name" value="TRANSLATIONAL ACTIVATOR OF CYTOCHROME C OXIDASE 1"/>
    <property type="match status" value="1"/>
</dbReference>
<dbReference type="Pfam" id="PF20772">
    <property type="entry name" value="TACO1_YebC_N"/>
    <property type="match status" value="1"/>
</dbReference>
<dbReference type="Pfam" id="PF01709">
    <property type="entry name" value="Transcrip_reg"/>
    <property type="match status" value="1"/>
</dbReference>
<dbReference type="SUPFAM" id="SSF75625">
    <property type="entry name" value="YebC-like"/>
    <property type="match status" value="1"/>
</dbReference>
<keyword id="KW-0963">Cytoplasm</keyword>
<keyword id="KW-0238">DNA-binding</keyword>
<keyword id="KW-0804">Transcription</keyword>
<keyword id="KW-0805">Transcription regulation</keyword>
<feature type="chain" id="PRO_0000175807" description="Probable transcriptional regulatory protein Erum3660/ERWE_CDS_03770">
    <location>
        <begin position="1"/>
        <end position="249"/>
    </location>
</feature>
<feature type="region of interest" description="Disordered" evidence="2">
    <location>
        <begin position="1"/>
        <end position="21"/>
    </location>
</feature>